<proteinExistence type="inferred from homology"/>
<dbReference type="EMBL" id="BA000040">
    <property type="protein sequence ID" value="BAC52735.1"/>
    <property type="molecule type" value="Genomic_DNA"/>
</dbReference>
<dbReference type="RefSeq" id="NP_774110.1">
    <property type="nucleotide sequence ID" value="NC_004463.1"/>
</dbReference>
<dbReference type="RefSeq" id="WP_011090203.1">
    <property type="nucleotide sequence ID" value="NC_004463.1"/>
</dbReference>
<dbReference type="SMR" id="Q89DG9"/>
<dbReference type="FunCoup" id="Q89DG9">
    <property type="interactions" value="301"/>
</dbReference>
<dbReference type="STRING" id="224911.AAV28_35035"/>
<dbReference type="EnsemblBacteria" id="BAC52735">
    <property type="protein sequence ID" value="BAC52735"/>
    <property type="gene ID" value="BAC52735"/>
</dbReference>
<dbReference type="GeneID" id="46494427"/>
<dbReference type="KEGG" id="bja:blr7470"/>
<dbReference type="PATRIC" id="fig|224911.44.peg.7569"/>
<dbReference type="eggNOG" id="COG0322">
    <property type="taxonomic scope" value="Bacteria"/>
</dbReference>
<dbReference type="HOGENOM" id="CLU_014841_3_0_5"/>
<dbReference type="InParanoid" id="Q89DG9"/>
<dbReference type="OrthoDB" id="9804933at2"/>
<dbReference type="PhylomeDB" id="Q89DG9"/>
<dbReference type="Proteomes" id="UP000002526">
    <property type="component" value="Chromosome"/>
</dbReference>
<dbReference type="GO" id="GO:0005737">
    <property type="term" value="C:cytoplasm"/>
    <property type="evidence" value="ECO:0007669"/>
    <property type="project" value="UniProtKB-SubCell"/>
</dbReference>
<dbReference type="GO" id="GO:0009380">
    <property type="term" value="C:excinuclease repair complex"/>
    <property type="evidence" value="ECO:0000318"/>
    <property type="project" value="GO_Central"/>
</dbReference>
<dbReference type="GO" id="GO:0003677">
    <property type="term" value="F:DNA binding"/>
    <property type="evidence" value="ECO:0007669"/>
    <property type="project" value="UniProtKB-UniRule"/>
</dbReference>
<dbReference type="GO" id="GO:0009381">
    <property type="term" value="F:excinuclease ABC activity"/>
    <property type="evidence" value="ECO:0007669"/>
    <property type="project" value="UniProtKB-UniRule"/>
</dbReference>
<dbReference type="GO" id="GO:0006974">
    <property type="term" value="P:DNA damage response"/>
    <property type="evidence" value="ECO:0000318"/>
    <property type="project" value="GO_Central"/>
</dbReference>
<dbReference type="GO" id="GO:0006289">
    <property type="term" value="P:nucleotide-excision repair"/>
    <property type="evidence" value="ECO:0007669"/>
    <property type="project" value="UniProtKB-UniRule"/>
</dbReference>
<dbReference type="GO" id="GO:0009432">
    <property type="term" value="P:SOS response"/>
    <property type="evidence" value="ECO:0007669"/>
    <property type="project" value="UniProtKB-UniRule"/>
</dbReference>
<dbReference type="CDD" id="cd10434">
    <property type="entry name" value="GIY-YIG_UvrC_Cho"/>
    <property type="match status" value="1"/>
</dbReference>
<dbReference type="FunFam" id="3.30.420.340:FF:000001">
    <property type="entry name" value="UvrABC system protein C"/>
    <property type="match status" value="1"/>
</dbReference>
<dbReference type="FunFam" id="3.40.1440.10:FF:000001">
    <property type="entry name" value="UvrABC system protein C"/>
    <property type="match status" value="1"/>
</dbReference>
<dbReference type="Gene3D" id="1.10.150.20">
    <property type="entry name" value="5' to 3' exonuclease, C-terminal subdomain"/>
    <property type="match status" value="1"/>
</dbReference>
<dbReference type="Gene3D" id="3.40.1440.10">
    <property type="entry name" value="GIY-YIG endonuclease"/>
    <property type="match status" value="1"/>
</dbReference>
<dbReference type="Gene3D" id="4.10.860.10">
    <property type="entry name" value="UVR domain"/>
    <property type="match status" value="1"/>
</dbReference>
<dbReference type="Gene3D" id="3.30.420.340">
    <property type="entry name" value="UvrC, RNAse H endonuclease domain"/>
    <property type="match status" value="1"/>
</dbReference>
<dbReference type="HAMAP" id="MF_00203">
    <property type="entry name" value="UvrC"/>
    <property type="match status" value="1"/>
</dbReference>
<dbReference type="InterPro" id="IPR000305">
    <property type="entry name" value="GIY-YIG_endonuc"/>
</dbReference>
<dbReference type="InterPro" id="IPR035901">
    <property type="entry name" value="GIY-YIG_endonuc_sf"/>
</dbReference>
<dbReference type="InterPro" id="IPR047296">
    <property type="entry name" value="GIY-YIG_UvrC_Cho"/>
</dbReference>
<dbReference type="InterPro" id="IPR003583">
    <property type="entry name" value="Hlx-hairpin-Hlx_DNA-bd_motif"/>
</dbReference>
<dbReference type="InterPro" id="IPR010994">
    <property type="entry name" value="RuvA_2-like"/>
</dbReference>
<dbReference type="InterPro" id="IPR001943">
    <property type="entry name" value="UVR_dom"/>
</dbReference>
<dbReference type="InterPro" id="IPR036876">
    <property type="entry name" value="UVR_dom_sf"/>
</dbReference>
<dbReference type="InterPro" id="IPR050066">
    <property type="entry name" value="UvrABC_protein_C"/>
</dbReference>
<dbReference type="InterPro" id="IPR004791">
    <property type="entry name" value="UvrC"/>
</dbReference>
<dbReference type="InterPro" id="IPR001162">
    <property type="entry name" value="UvrC_RNase_H_dom"/>
</dbReference>
<dbReference type="InterPro" id="IPR038476">
    <property type="entry name" value="UvrC_RNase_H_dom_sf"/>
</dbReference>
<dbReference type="NCBIfam" id="NF001824">
    <property type="entry name" value="PRK00558.1-5"/>
    <property type="match status" value="1"/>
</dbReference>
<dbReference type="NCBIfam" id="TIGR00194">
    <property type="entry name" value="uvrC"/>
    <property type="match status" value="1"/>
</dbReference>
<dbReference type="PANTHER" id="PTHR30562:SF1">
    <property type="entry name" value="UVRABC SYSTEM PROTEIN C"/>
    <property type="match status" value="1"/>
</dbReference>
<dbReference type="PANTHER" id="PTHR30562">
    <property type="entry name" value="UVRC/OXIDOREDUCTASE"/>
    <property type="match status" value="1"/>
</dbReference>
<dbReference type="Pfam" id="PF01541">
    <property type="entry name" value="GIY-YIG"/>
    <property type="match status" value="1"/>
</dbReference>
<dbReference type="Pfam" id="PF14520">
    <property type="entry name" value="HHH_5"/>
    <property type="match status" value="1"/>
</dbReference>
<dbReference type="Pfam" id="PF02151">
    <property type="entry name" value="UVR"/>
    <property type="match status" value="1"/>
</dbReference>
<dbReference type="Pfam" id="PF22920">
    <property type="entry name" value="UvrC_RNaseH"/>
    <property type="match status" value="1"/>
</dbReference>
<dbReference type="Pfam" id="PF08459">
    <property type="entry name" value="UvrC_RNaseH_dom"/>
    <property type="match status" value="1"/>
</dbReference>
<dbReference type="SMART" id="SM00465">
    <property type="entry name" value="GIYc"/>
    <property type="match status" value="1"/>
</dbReference>
<dbReference type="SMART" id="SM00278">
    <property type="entry name" value="HhH1"/>
    <property type="match status" value="2"/>
</dbReference>
<dbReference type="SUPFAM" id="SSF46600">
    <property type="entry name" value="C-terminal UvrC-binding domain of UvrB"/>
    <property type="match status" value="1"/>
</dbReference>
<dbReference type="SUPFAM" id="SSF82771">
    <property type="entry name" value="GIY-YIG endonuclease"/>
    <property type="match status" value="1"/>
</dbReference>
<dbReference type="SUPFAM" id="SSF47781">
    <property type="entry name" value="RuvA domain 2-like"/>
    <property type="match status" value="1"/>
</dbReference>
<dbReference type="PROSITE" id="PS50164">
    <property type="entry name" value="GIY_YIG"/>
    <property type="match status" value="1"/>
</dbReference>
<dbReference type="PROSITE" id="PS50151">
    <property type="entry name" value="UVR"/>
    <property type="match status" value="1"/>
</dbReference>
<dbReference type="PROSITE" id="PS50165">
    <property type="entry name" value="UVRC"/>
    <property type="match status" value="1"/>
</dbReference>
<organism>
    <name type="scientific">Bradyrhizobium diazoefficiens (strain JCM 10833 / BCRC 13528 / IAM 13628 / NBRC 14792 / USDA 110)</name>
    <dbReference type="NCBI Taxonomy" id="224911"/>
    <lineage>
        <taxon>Bacteria</taxon>
        <taxon>Pseudomonadati</taxon>
        <taxon>Pseudomonadota</taxon>
        <taxon>Alphaproteobacteria</taxon>
        <taxon>Hyphomicrobiales</taxon>
        <taxon>Nitrobacteraceae</taxon>
        <taxon>Bradyrhizobium</taxon>
    </lineage>
</organism>
<feature type="chain" id="PRO_0000264875" description="UvrABC system protein C">
    <location>
        <begin position="1"/>
        <end position="686"/>
    </location>
</feature>
<feature type="domain" description="GIY-YIG" evidence="1">
    <location>
        <begin position="81"/>
        <end position="160"/>
    </location>
</feature>
<feature type="domain" description="UVR" evidence="1">
    <location>
        <begin position="270"/>
        <end position="305"/>
    </location>
</feature>
<feature type="region of interest" description="Disordered" evidence="2">
    <location>
        <begin position="1"/>
        <end position="48"/>
    </location>
</feature>
<feature type="compositionally biased region" description="Basic and acidic residues" evidence="2">
    <location>
        <begin position="1"/>
        <end position="14"/>
    </location>
</feature>
<gene>
    <name evidence="1" type="primary">uvrC</name>
    <name type="ordered locus">blr7470</name>
</gene>
<evidence type="ECO:0000255" key="1">
    <source>
        <dbReference type="HAMAP-Rule" id="MF_00203"/>
    </source>
</evidence>
<evidence type="ECO:0000256" key="2">
    <source>
        <dbReference type="SAM" id="MobiDB-lite"/>
    </source>
</evidence>
<reference key="1">
    <citation type="journal article" date="2002" name="DNA Res.">
        <title>Complete genomic sequence of nitrogen-fixing symbiotic bacterium Bradyrhizobium japonicum USDA110.</title>
        <authorList>
            <person name="Kaneko T."/>
            <person name="Nakamura Y."/>
            <person name="Sato S."/>
            <person name="Minamisawa K."/>
            <person name="Uchiumi T."/>
            <person name="Sasamoto S."/>
            <person name="Watanabe A."/>
            <person name="Idesawa K."/>
            <person name="Iriguchi M."/>
            <person name="Kawashima K."/>
            <person name="Kohara M."/>
            <person name="Matsumoto M."/>
            <person name="Shimpo S."/>
            <person name="Tsuruoka H."/>
            <person name="Wada T."/>
            <person name="Yamada M."/>
            <person name="Tabata S."/>
        </authorList>
    </citation>
    <scope>NUCLEOTIDE SEQUENCE [LARGE SCALE GENOMIC DNA]</scope>
    <source>
        <strain>JCM 10833 / BCRC 13528 / IAM 13628 / NBRC 14792 / USDA 110</strain>
    </source>
</reference>
<protein>
    <recommendedName>
        <fullName evidence="1">UvrABC system protein C</fullName>
        <shortName evidence="1">Protein UvrC</shortName>
    </recommendedName>
    <alternativeName>
        <fullName evidence="1">Excinuclease ABC subunit C</fullName>
    </alternativeName>
</protein>
<comment type="function">
    <text evidence="1">The UvrABC repair system catalyzes the recognition and processing of DNA lesions. UvrC both incises the 5' and 3' sides of the lesion. The N-terminal half is responsible for the 3' incision and the C-terminal half is responsible for the 5' incision.</text>
</comment>
<comment type="subunit">
    <text evidence="1">Interacts with UvrB in an incision complex.</text>
</comment>
<comment type="subcellular location">
    <subcellularLocation>
        <location evidence="1">Cytoplasm</location>
    </subcellularLocation>
</comment>
<comment type="similarity">
    <text evidence="1">Belongs to the UvrC family.</text>
</comment>
<keyword id="KW-0963">Cytoplasm</keyword>
<keyword id="KW-0227">DNA damage</keyword>
<keyword id="KW-0228">DNA excision</keyword>
<keyword id="KW-0234">DNA repair</keyword>
<keyword id="KW-0267">Excision nuclease</keyword>
<keyword id="KW-1185">Reference proteome</keyword>
<keyword id="KW-0742">SOS response</keyword>
<accession>Q89DG9</accession>
<sequence length="686" mass="76253">MVHDSTDDPDDTRVRKSRRGTALDAPPQETAPPDLDPATTGGDDEDDALLPDILEESGAVGEEPLASGHEAIERAVRLAPTSPGVYRMLNANADVLYVGKAKNVKKRLSNYARQSAPQPARILRMIAATVTVEIVSTNTETEALLLEANLIKQLRPRFNVQLRDDKSFPYILITGDHWAPQILKHRGAQTRPGRYFGPFASAGAVNRTITALQRAFLIRSCTDSFFESRSRPCLLYQIRRCAGPCTREIDFPGYTTLVREATDFLSGKSHAVKQELAGEMEKAANELEFETAALYRDRLAALSAIQSQQGINPRTVEEADVFAIHQEGGFSCVEVFFFRTGQNWGNRAYFPRAEKTFTPEEVLGSFLAQFYDDKPPPKNILLSHEIEESELLANALSIKAGHKIEVTAPKRGEKKELVAHALTNAREALGRKLADTATQGRLLDAMATTLSLPHAPKRIEVYDNSHIQGTNAVGAMIVAGPDGFVKNQYRKFNIKSEGLTPGDDYGMMREVLERRFKRLINPPEEGAKVKDDDFPQWPDLVIIDGGRGQLNAVREIFANLGLTQVSLMSVAKGPDRDAGRETLFMPEREAIKLEPRDPVLYFIQRLRDEAHRFVIGSHRKLRKKDIREAGLQEIPGIGPSRKRALLHHFGTLKEIERASIADLGKVPGVSAESARRIFEYFHPQPG</sequence>
<name>UVRC_BRADU</name>